<protein>
    <recommendedName>
        <fullName evidence="1">PPE family protein PPE44</fullName>
    </recommendedName>
</protein>
<name>PPE44_MYCTO</name>
<gene>
    <name evidence="1" type="primary">PPE44</name>
    <name evidence="3" type="ordered locus">MT2840</name>
</gene>
<comment type="function">
    <text evidence="1">Virulence factor that modulates host innate immune response.</text>
</comment>
<comment type="subcellular location">
    <subcellularLocation>
        <location evidence="1">Secreted</location>
        <location evidence="1">Cell wall</location>
    </subcellularLocation>
    <subcellularLocation>
        <location evidence="1">Cell surface</location>
    </subcellularLocation>
</comment>
<comment type="similarity">
    <text evidence="2">Belongs to the mycobacterial PPE family.</text>
</comment>
<comment type="sequence caution" evidence="2">
    <conflict type="erroneous initiation">
        <sequence resource="EMBL-CDS" id="AAK47159"/>
    </conflict>
    <text>Extended N-terminus.</text>
</comment>
<accession>P9WHZ2</accession>
<accession>L0TC75</accession>
<accession>Q79FA7</accession>
<accession>Q7D6M0</accession>
<organism>
    <name type="scientific">Mycobacterium tuberculosis (strain CDC 1551 / Oshkosh)</name>
    <dbReference type="NCBI Taxonomy" id="83331"/>
    <lineage>
        <taxon>Bacteria</taxon>
        <taxon>Bacillati</taxon>
        <taxon>Actinomycetota</taxon>
        <taxon>Actinomycetes</taxon>
        <taxon>Mycobacteriales</taxon>
        <taxon>Mycobacteriaceae</taxon>
        <taxon>Mycobacterium</taxon>
        <taxon>Mycobacterium tuberculosis complex</taxon>
    </lineage>
</organism>
<evidence type="ECO:0000250" key="1">
    <source>
        <dbReference type="UniProtKB" id="P9WHZ3"/>
    </source>
</evidence>
<evidence type="ECO:0000305" key="2"/>
<evidence type="ECO:0000312" key="3">
    <source>
        <dbReference type="EMBL" id="AAK47159.1"/>
    </source>
</evidence>
<dbReference type="EMBL" id="AE000516">
    <property type="protein sequence ID" value="AAK47159.1"/>
    <property type="status" value="ALT_INIT"/>
    <property type="molecule type" value="Genomic_DNA"/>
</dbReference>
<dbReference type="PIR" id="A70882">
    <property type="entry name" value="A70882"/>
</dbReference>
<dbReference type="RefSeq" id="WP_003906903.1">
    <property type="nucleotide sequence ID" value="NZ_KK341227.1"/>
</dbReference>
<dbReference type="SMR" id="P9WHZ2"/>
<dbReference type="KEGG" id="mtc:MT2840"/>
<dbReference type="PATRIC" id="fig|83331.31.peg.3063"/>
<dbReference type="HOGENOM" id="CLU_000243_0_0_11"/>
<dbReference type="Proteomes" id="UP000001020">
    <property type="component" value="Chromosome"/>
</dbReference>
<dbReference type="GO" id="GO:0009986">
    <property type="term" value="C:cell surface"/>
    <property type="evidence" value="ECO:0007669"/>
    <property type="project" value="UniProtKB-SubCell"/>
</dbReference>
<dbReference type="GO" id="GO:0052572">
    <property type="term" value="P:response to host immune response"/>
    <property type="evidence" value="ECO:0007669"/>
    <property type="project" value="TreeGrafter"/>
</dbReference>
<dbReference type="Gene3D" id="1.20.1260.20">
    <property type="entry name" value="PPE superfamily"/>
    <property type="match status" value="1"/>
</dbReference>
<dbReference type="InterPro" id="IPR022171">
    <property type="entry name" value="PPE_C"/>
</dbReference>
<dbReference type="InterPro" id="IPR000030">
    <property type="entry name" value="PPE_dom"/>
</dbReference>
<dbReference type="InterPro" id="IPR038332">
    <property type="entry name" value="PPE_sf"/>
</dbReference>
<dbReference type="PANTHER" id="PTHR46766">
    <property type="entry name" value="GLUTAMINE-RICH PROTEIN 2"/>
    <property type="match status" value="1"/>
</dbReference>
<dbReference type="PANTHER" id="PTHR46766:SF1">
    <property type="entry name" value="GLUTAMINE-RICH PROTEIN 2"/>
    <property type="match status" value="1"/>
</dbReference>
<dbReference type="Pfam" id="PF00823">
    <property type="entry name" value="PPE"/>
    <property type="match status" value="1"/>
</dbReference>
<dbReference type="Pfam" id="PF12484">
    <property type="entry name" value="PPE-SVP"/>
    <property type="match status" value="1"/>
</dbReference>
<dbReference type="SUPFAM" id="SSF140459">
    <property type="entry name" value="PE/PPE dimer-like"/>
    <property type="match status" value="1"/>
</dbReference>
<proteinExistence type="inferred from homology"/>
<feature type="chain" id="PRO_0000428097" description="PPE family protein PPE44">
    <location>
        <begin position="1"/>
        <end position="382"/>
    </location>
</feature>
<sequence>MDFGALPPEVNSARMYGGAGAADLLAAAAAWNGIAVEVSTAASSVGSVITRLSTEHWMGPASLSMAAAVQPYLVWLTCTAESSALAAAQAMASAAAFETAFALTVPPAEVVANRALLAELTATNILGQNVSAIAATEARYGEMWAQDASAMYGYAAASAVAARLNPLTRPSHITNPAGLAHQAAAVGQAGASAFARQVGLSHLISDVADAVLSFASPVMSAADTGLEAVRQFLNLDVPLFVESAFHGLGGVADFATAAIGNMTLLADAMGTVGGAAPGGGAAAAVAHAVAPAGVGGTALTADLGNASVVGRLSVPASWSTAAPATAAGAALDGTGWAVPEEDGPIAVMPPAPGMVVAANSVGADSGPRYGVKPIVMPKHGLF</sequence>
<keyword id="KW-0134">Cell wall</keyword>
<keyword id="KW-1185">Reference proteome</keyword>
<keyword id="KW-0964">Secreted</keyword>
<keyword id="KW-0843">Virulence</keyword>
<reference key="1">
    <citation type="journal article" date="2002" name="J. Bacteriol.">
        <title>Whole-genome comparison of Mycobacterium tuberculosis clinical and laboratory strains.</title>
        <authorList>
            <person name="Fleischmann R.D."/>
            <person name="Alland D."/>
            <person name="Eisen J.A."/>
            <person name="Carpenter L."/>
            <person name="White O."/>
            <person name="Peterson J.D."/>
            <person name="DeBoy R.T."/>
            <person name="Dodson R.J."/>
            <person name="Gwinn M.L."/>
            <person name="Haft D.H."/>
            <person name="Hickey E.K."/>
            <person name="Kolonay J.F."/>
            <person name="Nelson W.C."/>
            <person name="Umayam L.A."/>
            <person name="Ermolaeva M.D."/>
            <person name="Salzberg S.L."/>
            <person name="Delcher A."/>
            <person name="Utterback T.R."/>
            <person name="Weidman J.F."/>
            <person name="Khouri H.M."/>
            <person name="Gill J."/>
            <person name="Mikula A."/>
            <person name="Bishai W."/>
            <person name="Jacobs W.R. Jr."/>
            <person name="Venter J.C."/>
            <person name="Fraser C.M."/>
        </authorList>
    </citation>
    <scope>NUCLEOTIDE SEQUENCE [LARGE SCALE GENOMIC DNA]</scope>
    <source>
        <strain>CDC 1551 / Oshkosh</strain>
    </source>
</reference>